<organism evidence="7">
    <name type="scientific">Bothriechis nigroviridis</name>
    <name type="common">Black-speckled palm pit viper</name>
    <dbReference type="NCBI Taxonomy" id="88079"/>
    <lineage>
        <taxon>Eukaryota</taxon>
        <taxon>Metazoa</taxon>
        <taxon>Chordata</taxon>
        <taxon>Craniata</taxon>
        <taxon>Vertebrata</taxon>
        <taxon>Euteleostomi</taxon>
        <taxon>Lepidosauria</taxon>
        <taxon>Squamata</taxon>
        <taxon>Bifurcata</taxon>
        <taxon>Unidentata</taxon>
        <taxon>Episquamata</taxon>
        <taxon>Toxicofera</taxon>
        <taxon>Serpentes</taxon>
        <taxon>Colubroidea</taxon>
        <taxon>Viperidae</taxon>
        <taxon>Crotalinae</taxon>
        <taxon>Bothriechis</taxon>
    </lineage>
</organism>
<reference evidence="8" key="1">
    <citation type="journal article" date="2015" name="Toxicon">
        <title>First crotoxin-like phospholipase A(2) complex from a New World non-rattlesnake species: nigroviriditoxin, from the arboreal Neotropical snake Bothriechis nigroviridis.</title>
        <authorList>
            <person name="Lomonte B."/>
            <person name="Mora-Obando D."/>
            <person name="Fernandez J."/>
            <person name="Sanz L."/>
            <person name="Pla D."/>
            <person name="Gutierrez J.M."/>
            <person name="Calvete J.J."/>
        </authorList>
    </citation>
    <scope>PROTEIN SEQUENCE OF 1-121</scope>
    <scope>FUNCTION</scope>
    <scope>SUBUNIT</scope>
    <scope>SUBCELLULAR LOCATION</scope>
    <scope>MASS SPECTROMETRY</scope>
    <scope>TOXIC DOSE</scope>
    <scope>IDENTIFICATION BY MASS SPECTROMETRY</scope>
    <source>
        <tissue evidence="7">Venom</tissue>
    </source>
</reference>
<reference key="2">
    <citation type="journal article" date="2010" name="J. Proteome Res.">
        <title>Snake venomics of Bothriechis nigroviridis reveals extreme variability among palm pitviper venoms: different evolutionary solutions for the same trophic purpose.</title>
        <authorList>
            <person name="Fernandez J."/>
            <person name="Lomonte B."/>
            <person name="Sanz L."/>
            <person name="Angulo Y."/>
            <person name="Gutierrez J.M."/>
            <person name="Calvete J.J."/>
        </authorList>
    </citation>
    <scope>PROTEIN SEQUENCE OF 1-64</scope>
    <scope>SUBCELLULAR LOCATION</scope>
    <scope>MASS SPECTROMETRY</scope>
    <scope>IDENTIFICATION BY MASS SPECTROMETRY</scope>
    <source>
        <tissue evidence="6">Venom</tissue>
    </source>
</reference>
<proteinExistence type="evidence at protein level"/>
<dbReference type="EC" id="3.1.1.4" evidence="2"/>
<dbReference type="SMR" id="C0HJL8"/>
<dbReference type="GO" id="GO:0005576">
    <property type="term" value="C:extracellular region"/>
    <property type="evidence" value="ECO:0007669"/>
    <property type="project" value="UniProtKB-SubCell"/>
</dbReference>
<dbReference type="GO" id="GO:0005509">
    <property type="term" value="F:calcium ion binding"/>
    <property type="evidence" value="ECO:0007669"/>
    <property type="project" value="InterPro"/>
</dbReference>
<dbReference type="GO" id="GO:0047498">
    <property type="term" value="F:calcium-dependent phospholipase A2 activity"/>
    <property type="evidence" value="ECO:0007669"/>
    <property type="project" value="TreeGrafter"/>
</dbReference>
<dbReference type="GO" id="GO:0005543">
    <property type="term" value="F:phospholipid binding"/>
    <property type="evidence" value="ECO:0007669"/>
    <property type="project" value="TreeGrafter"/>
</dbReference>
<dbReference type="GO" id="GO:0090729">
    <property type="term" value="F:toxin activity"/>
    <property type="evidence" value="ECO:0007669"/>
    <property type="project" value="UniProtKB-KW"/>
</dbReference>
<dbReference type="GO" id="GO:0050482">
    <property type="term" value="P:arachidonate secretion"/>
    <property type="evidence" value="ECO:0007669"/>
    <property type="project" value="InterPro"/>
</dbReference>
<dbReference type="GO" id="GO:0016042">
    <property type="term" value="P:lipid catabolic process"/>
    <property type="evidence" value="ECO:0007669"/>
    <property type="project" value="InterPro"/>
</dbReference>
<dbReference type="GO" id="GO:0042130">
    <property type="term" value="P:negative regulation of T cell proliferation"/>
    <property type="evidence" value="ECO:0007669"/>
    <property type="project" value="TreeGrafter"/>
</dbReference>
<dbReference type="GO" id="GO:0006644">
    <property type="term" value="P:phospholipid metabolic process"/>
    <property type="evidence" value="ECO:0007669"/>
    <property type="project" value="InterPro"/>
</dbReference>
<dbReference type="CDD" id="cd00125">
    <property type="entry name" value="PLA2c"/>
    <property type="match status" value="1"/>
</dbReference>
<dbReference type="FunFam" id="1.20.90.10:FF:000001">
    <property type="entry name" value="Basic phospholipase A2 homolog"/>
    <property type="match status" value="1"/>
</dbReference>
<dbReference type="Gene3D" id="1.20.90.10">
    <property type="entry name" value="Phospholipase A2 domain"/>
    <property type="match status" value="1"/>
</dbReference>
<dbReference type="InterPro" id="IPR001211">
    <property type="entry name" value="PLipase_A2"/>
</dbReference>
<dbReference type="InterPro" id="IPR033112">
    <property type="entry name" value="PLipase_A2_Asp_AS"/>
</dbReference>
<dbReference type="InterPro" id="IPR016090">
    <property type="entry name" value="PLipase_A2_dom"/>
</dbReference>
<dbReference type="InterPro" id="IPR036444">
    <property type="entry name" value="PLipase_A2_dom_sf"/>
</dbReference>
<dbReference type="InterPro" id="IPR033113">
    <property type="entry name" value="PLipase_A2_His_AS"/>
</dbReference>
<dbReference type="PANTHER" id="PTHR11716">
    <property type="entry name" value="PHOSPHOLIPASE A2 FAMILY MEMBER"/>
    <property type="match status" value="1"/>
</dbReference>
<dbReference type="PANTHER" id="PTHR11716:SF9">
    <property type="entry name" value="PHOSPHOLIPASE A2, MEMBRANE ASSOCIATED"/>
    <property type="match status" value="1"/>
</dbReference>
<dbReference type="Pfam" id="PF00068">
    <property type="entry name" value="Phospholip_A2_1"/>
    <property type="match status" value="1"/>
</dbReference>
<dbReference type="PRINTS" id="PR00389">
    <property type="entry name" value="PHPHLIPASEA2"/>
</dbReference>
<dbReference type="SMART" id="SM00085">
    <property type="entry name" value="PA2c"/>
    <property type="match status" value="1"/>
</dbReference>
<dbReference type="SUPFAM" id="SSF48619">
    <property type="entry name" value="Phospholipase A2, PLA2"/>
    <property type="match status" value="1"/>
</dbReference>
<dbReference type="PROSITE" id="PS00119">
    <property type="entry name" value="PA2_ASP"/>
    <property type="match status" value="1"/>
</dbReference>
<dbReference type="PROSITE" id="PS00118">
    <property type="entry name" value="PA2_HIS"/>
    <property type="match status" value="1"/>
</dbReference>
<feature type="chain" id="PRO_0000434985" description="Phospholipase A2 nigroviriditoxin basic subunit B">
    <location>
        <begin position="1"/>
        <end position="122"/>
    </location>
</feature>
<feature type="active site" evidence="2">
    <location>
        <position position="47"/>
    </location>
</feature>
<feature type="active site" evidence="3">
    <location>
        <position position="89"/>
    </location>
</feature>
<feature type="binding site" evidence="1">
    <location>
        <position position="27"/>
    </location>
    <ligand>
        <name>Ca(2+)</name>
        <dbReference type="ChEBI" id="CHEBI:29108"/>
    </ligand>
</feature>
<feature type="binding site" evidence="1">
    <location>
        <position position="29"/>
    </location>
    <ligand>
        <name>Ca(2+)</name>
        <dbReference type="ChEBI" id="CHEBI:29108"/>
    </ligand>
</feature>
<feature type="binding site" evidence="1">
    <location>
        <position position="31"/>
    </location>
    <ligand>
        <name>Ca(2+)</name>
        <dbReference type="ChEBI" id="CHEBI:29108"/>
    </ligand>
</feature>
<feature type="binding site" evidence="1">
    <location>
        <position position="48"/>
    </location>
    <ligand>
        <name>Ca(2+)</name>
        <dbReference type="ChEBI" id="CHEBI:29108"/>
    </ligand>
</feature>
<feature type="disulfide bond" evidence="1">
    <location>
        <begin position="26"/>
        <end position="115"/>
    </location>
</feature>
<feature type="disulfide bond" evidence="1">
    <location>
        <begin position="28"/>
        <end position="44"/>
    </location>
</feature>
<feature type="disulfide bond" evidence="1">
    <location>
        <begin position="43"/>
        <end position="95"/>
    </location>
</feature>
<feature type="disulfide bond" evidence="1">
    <location>
        <begin position="49"/>
        <end position="122"/>
    </location>
</feature>
<feature type="disulfide bond" evidence="1">
    <location>
        <begin position="50"/>
        <end position="88"/>
    </location>
</feature>
<feature type="disulfide bond" evidence="1">
    <location>
        <begin position="57"/>
        <end position="81"/>
    </location>
</feature>
<feature type="disulfide bond" evidence="1">
    <location>
        <begin position="75"/>
        <end position="86"/>
    </location>
</feature>
<feature type="unsure residue" description="Assigned by comparison with orthologs" evidence="9">
    <location>
        <position position="122"/>
    </location>
</feature>
<feature type="sequence conflict" description="In Ref. 2; AA sequence." evidence="8" ref="2">
    <original>S</original>
    <variation>W</variation>
    <location>
        <position position="61"/>
    </location>
</feature>
<evidence type="ECO:0000250" key="1">
    <source>
        <dbReference type="UniProtKB" id="P24027"/>
    </source>
</evidence>
<evidence type="ECO:0000255" key="2">
    <source>
        <dbReference type="PROSITE-ProRule" id="PRU10035"/>
    </source>
</evidence>
<evidence type="ECO:0000255" key="3">
    <source>
        <dbReference type="PROSITE-ProRule" id="PRU10036"/>
    </source>
</evidence>
<evidence type="ECO:0000269" key="4">
    <source>
    </source>
</evidence>
<evidence type="ECO:0000269" key="5">
    <source>
    </source>
</evidence>
<evidence type="ECO:0000303" key="6">
    <source>
    </source>
</evidence>
<evidence type="ECO:0000303" key="7">
    <source>
    </source>
</evidence>
<evidence type="ECO:0000305" key="8"/>
<evidence type="ECO:0000305" key="9">
    <source>
    </source>
</evidence>
<sequence>NLLQFNRMIKLETKKNAVPFYAFYGCYCGWGGQGQPKDATDRCCFEHDCCYGKLTKCNTKSDLYSYSSKYGFLLCGKGTWCEEQICECDRIAATCLRRSLDTYKLKYMFYLDSYCKGPSEKC</sequence>
<name>PA2B_BOTNI</name>
<protein>
    <recommendedName>
        <fullName evidence="9">Phospholipase A2 nigroviriditoxin basic subunit B</fullName>
        <shortName evidence="7">Ngvtx-B</shortName>
        <shortName evidence="8">svPLA2</shortName>
        <ecNumber evidence="2">3.1.1.4</ecNumber>
    </recommendedName>
    <alternativeName>
        <fullName evidence="2">Phospholipase A(2)</fullName>
    </alternativeName>
</protein>
<comment type="function">
    <text evidence="5">Heterodimer A-B: Nigroviriditoxin possesses phospholipase A2 (PLA2) activity. It consists of a non-covalent association of a basic PLA2 subunit B with a non-enzymatic subunit A.</text>
</comment>
<comment type="function">
    <text evidence="5">Subunit B: Snake venom phospholipase A2 (PLA2) that induces myonecrosis in mice. PLA2 catalyzes the calcium-dependent hydrolysis of the 2-acyl groups in 3-sn-phosphoglycerides.</text>
</comment>
<comment type="catalytic activity">
    <reaction evidence="2">
        <text>a 1,2-diacyl-sn-glycero-3-phosphocholine + H2O = a 1-acyl-sn-glycero-3-phosphocholine + a fatty acid + H(+)</text>
        <dbReference type="Rhea" id="RHEA:15801"/>
        <dbReference type="ChEBI" id="CHEBI:15377"/>
        <dbReference type="ChEBI" id="CHEBI:15378"/>
        <dbReference type="ChEBI" id="CHEBI:28868"/>
        <dbReference type="ChEBI" id="CHEBI:57643"/>
        <dbReference type="ChEBI" id="CHEBI:58168"/>
        <dbReference type="EC" id="3.1.1.4"/>
    </reaction>
</comment>
<comment type="cofactor">
    <cofactor evidence="1">
        <name>Ca(2+)</name>
        <dbReference type="ChEBI" id="CHEBI:29108"/>
    </cofactor>
    <text evidence="1">Binds 1 Ca(2+) ion.</text>
</comment>
<comment type="subunit">
    <text evidence="5">Nigroviriditoxin is a heterodimer of an acidic subunit A and a basic subunit B.</text>
</comment>
<comment type="subcellular location">
    <subcellularLocation>
        <location evidence="4 5">Secreted</location>
    </subcellularLocation>
</comment>
<comment type="tissue specificity">
    <text evidence="9">Expressed by the venom gland.</text>
</comment>
<comment type="mass spectrometry"/>
<comment type="mass spectrometry"/>
<comment type="toxic dose">
    <text evidence="5">LD(50) is 2.9 mg/kg by intravenous injection in mice. Toxicity is higher in combination with subunit A.</text>
</comment>
<comment type="similarity">
    <text evidence="8">Belongs to the phospholipase A2 family. Group II subfamily. D49 sub-subfamily.</text>
</comment>
<accession>C0HJL8</accession>
<keyword id="KW-0106">Calcium</keyword>
<keyword id="KW-0903">Direct protein sequencing</keyword>
<keyword id="KW-1015">Disulfide bond</keyword>
<keyword id="KW-0378">Hydrolase</keyword>
<keyword id="KW-0479">Metal-binding</keyword>
<keyword id="KW-0964">Secreted</keyword>
<keyword id="KW-0800">Toxin</keyword>